<organism>
    <name type="scientific">Acanthamoeba polyphaga mimivirus</name>
    <name type="common">APMV</name>
    <dbReference type="NCBI Taxonomy" id="212035"/>
    <lineage>
        <taxon>Viruses</taxon>
        <taxon>Varidnaviria</taxon>
        <taxon>Bamfordvirae</taxon>
        <taxon>Nucleocytoviricota</taxon>
        <taxon>Megaviricetes</taxon>
        <taxon>Imitervirales</taxon>
        <taxon>Mimiviridae</taxon>
        <taxon>Megamimivirinae</taxon>
        <taxon>Mimivirus</taxon>
        <taxon>Mimivirus bradfordmassiliense</taxon>
    </lineage>
</organism>
<proteinExistence type="predicted"/>
<accession>Q5UQ97</accession>
<reference key="1">
    <citation type="journal article" date="2004" name="Science">
        <title>The 1.2-megabase genome sequence of Mimivirus.</title>
        <authorList>
            <person name="Raoult D."/>
            <person name="Audic S."/>
            <person name="Robert C."/>
            <person name="Abergel C."/>
            <person name="Renesto P."/>
            <person name="Ogata H."/>
            <person name="La Scola B."/>
            <person name="Susan M."/>
            <person name="Claverie J.-M."/>
        </authorList>
    </citation>
    <scope>NUCLEOTIDE SEQUENCE [LARGE SCALE GENOMIC DNA]</scope>
    <source>
        <strain>Rowbotham-Bradford</strain>
    </source>
</reference>
<dbReference type="EMBL" id="AY653733">
    <property type="protein sequence ID" value="AAV50803.1"/>
    <property type="molecule type" value="Genomic_DNA"/>
</dbReference>
<dbReference type="SMR" id="Q5UQ97"/>
<dbReference type="Proteomes" id="UP000001134">
    <property type="component" value="Genome"/>
</dbReference>
<dbReference type="InterPro" id="IPR029404">
    <property type="entry name" value="CDIN1"/>
</dbReference>
<dbReference type="Pfam" id="PF14811">
    <property type="entry name" value="TPD"/>
    <property type="match status" value="1"/>
</dbReference>
<gene>
    <name type="ordered locus">MIMI_L539</name>
</gene>
<organismHost>
    <name type="scientific">Acanthamoeba polyphaga</name>
    <name type="common">Amoeba</name>
    <dbReference type="NCBI Taxonomy" id="5757"/>
</organismHost>
<sequence length="275" mass="32361">MKKLVWNNYMVYNPNTIAQRMNFVKQHINYFFPMNESEKIILDNYAKKINISPHQLYSFGNMLRIQNDLNNSVSYKKKKESIKSSFSKEISNNHKNHDESIKNFIESTKIPANIVLKIIKNTPIYKEEDFDESDYIKNLKKSYYDHNKDVLNRSKKFEVCLENYLRNLGVDFKTETDIIREKLHKFTPDILLNKPIIIELNGKEYPISWIDAKNYTLIRMPFVLESLRKQSNKYNKAFGNGAFVFHYGLDSSINIPNTLILDGSKISNADNNYCL</sequence>
<protein>
    <recommendedName>
        <fullName>Uncharacterized protein L539</fullName>
    </recommendedName>
</protein>
<keyword id="KW-1185">Reference proteome</keyword>
<feature type="chain" id="PRO_0000253278" description="Uncharacterized protein L539">
    <location>
        <begin position="1"/>
        <end position="275"/>
    </location>
</feature>
<name>YL539_MIMIV</name>